<comment type="function">
    <text evidence="1">Participates actively in the response to hyperosmotic and heat shock by preventing the aggregation of stress-denatured proteins and by disaggregating proteins, also in an autonomous, DnaK-independent fashion. Unfolded proteins bind initially to DnaJ; upon interaction with the DnaJ-bound protein, DnaK hydrolyzes its bound ATP, resulting in the formation of a stable complex. GrpE releases ADP from DnaK; ATP binding to DnaK triggers the release of the substrate protein, thus completing the reaction cycle. Several rounds of ATP-dependent interactions between DnaJ, DnaK and GrpE are required for fully efficient folding. Also involved, together with DnaK and GrpE, in the DNA replication of plasmids through activation of initiation proteins.</text>
</comment>
<comment type="cofactor">
    <cofactor evidence="1">
        <name>Zn(2+)</name>
        <dbReference type="ChEBI" id="CHEBI:29105"/>
    </cofactor>
    <text evidence="1">Binds 2 Zn(2+) ions per monomer.</text>
</comment>
<comment type="subunit">
    <text evidence="1">Homodimer.</text>
</comment>
<comment type="subcellular location">
    <subcellularLocation>
        <location evidence="1">Cytoplasm</location>
    </subcellularLocation>
</comment>
<comment type="domain">
    <text evidence="1">The J domain is necessary and sufficient to stimulate DnaK ATPase activity. Zinc center 1 plays an important role in the autonomous, DnaK-independent chaperone activity of DnaJ. Zinc center 2 is essential for interaction with DnaK and for DnaJ activity.</text>
</comment>
<comment type="similarity">
    <text evidence="1">Belongs to the DnaJ family.</text>
</comment>
<organism>
    <name type="scientific">Leptothrix cholodnii (strain ATCC 51168 / LMG 8142 / SP-6)</name>
    <name type="common">Leptothrix discophora (strain SP-6)</name>
    <dbReference type="NCBI Taxonomy" id="395495"/>
    <lineage>
        <taxon>Bacteria</taxon>
        <taxon>Pseudomonadati</taxon>
        <taxon>Pseudomonadota</taxon>
        <taxon>Betaproteobacteria</taxon>
        <taxon>Burkholderiales</taxon>
        <taxon>Sphaerotilaceae</taxon>
        <taxon>Leptothrix</taxon>
    </lineage>
</organism>
<keyword id="KW-0143">Chaperone</keyword>
<keyword id="KW-0963">Cytoplasm</keyword>
<keyword id="KW-0235">DNA replication</keyword>
<keyword id="KW-0479">Metal-binding</keyword>
<keyword id="KW-1185">Reference proteome</keyword>
<keyword id="KW-0677">Repeat</keyword>
<keyword id="KW-0346">Stress response</keyword>
<keyword id="KW-0862">Zinc</keyword>
<keyword id="KW-0863">Zinc-finger</keyword>
<feature type="chain" id="PRO_1000137704" description="Chaperone protein DnaJ">
    <location>
        <begin position="1"/>
        <end position="385"/>
    </location>
</feature>
<feature type="domain" description="J" evidence="1">
    <location>
        <begin position="5"/>
        <end position="72"/>
    </location>
</feature>
<feature type="repeat" description="CXXCXGXG motif">
    <location>
        <begin position="158"/>
        <end position="165"/>
    </location>
</feature>
<feature type="repeat" description="CXXCXGXG motif">
    <location>
        <begin position="175"/>
        <end position="182"/>
    </location>
</feature>
<feature type="repeat" description="CXXCXGXG motif">
    <location>
        <begin position="197"/>
        <end position="204"/>
    </location>
</feature>
<feature type="repeat" description="CXXCXGXG motif">
    <location>
        <begin position="211"/>
        <end position="218"/>
    </location>
</feature>
<feature type="zinc finger region" description="CR-type" evidence="1">
    <location>
        <begin position="145"/>
        <end position="223"/>
    </location>
</feature>
<feature type="region of interest" description="Disordered" evidence="2">
    <location>
        <begin position="26"/>
        <end position="48"/>
    </location>
</feature>
<feature type="region of interest" description="Disordered" evidence="2">
    <location>
        <begin position="362"/>
        <end position="385"/>
    </location>
</feature>
<feature type="compositionally biased region" description="Basic and acidic residues" evidence="2">
    <location>
        <begin position="35"/>
        <end position="48"/>
    </location>
</feature>
<feature type="binding site" evidence="1">
    <location>
        <position position="158"/>
    </location>
    <ligand>
        <name>Zn(2+)</name>
        <dbReference type="ChEBI" id="CHEBI:29105"/>
        <label>1</label>
    </ligand>
</feature>
<feature type="binding site" evidence="1">
    <location>
        <position position="161"/>
    </location>
    <ligand>
        <name>Zn(2+)</name>
        <dbReference type="ChEBI" id="CHEBI:29105"/>
        <label>1</label>
    </ligand>
</feature>
<feature type="binding site" evidence="1">
    <location>
        <position position="175"/>
    </location>
    <ligand>
        <name>Zn(2+)</name>
        <dbReference type="ChEBI" id="CHEBI:29105"/>
        <label>2</label>
    </ligand>
</feature>
<feature type="binding site" evidence="1">
    <location>
        <position position="178"/>
    </location>
    <ligand>
        <name>Zn(2+)</name>
        <dbReference type="ChEBI" id="CHEBI:29105"/>
        <label>2</label>
    </ligand>
</feature>
<feature type="binding site" evidence="1">
    <location>
        <position position="197"/>
    </location>
    <ligand>
        <name>Zn(2+)</name>
        <dbReference type="ChEBI" id="CHEBI:29105"/>
        <label>2</label>
    </ligand>
</feature>
<feature type="binding site" evidence="1">
    <location>
        <position position="200"/>
    </location>
    <ligand>
        <name>Zn(2+)</name>
        <dbReference type="ChEBI" id="CHEBI:29105"/>
        <label>2</label>
    </ligand>
</feature>
<feature type="binding site" evidence="1">
    <location>
        <position position="211"/>
    </location>
    <ligand>
        <name>Zn(2+)</name>
        <dbReference type="ChEBI" id="CHEBI:29105"/>
        <label>1</label>
    </ligand>
</feature>
<feature type="binding site" evidence="1">
    <location>
        <position position="214"/>
    </location>
    <ligand>
        <name>Zn(2+)</name>
        <dbReference type="ChEBI" id="CHEBI:29105"/>
        <label>1</label>
    </ligand>
</feature>
<proteinExistence type="inferred from homology"/>
<name>DNAJ_LEPCP</name>
<protein>
    <recommendedName>
        <fullName evidence="1">Chaperone protein DnaJ</fullName>
    </recommendedName>
</protein>
<dbReference type="EMBL" id="CP001013">
    <property type="protein sequence ID" value="ACB34842.1"/>
    <property type="molecule type" value="Genomic_DNA"/>
</dbReference>
<dbReference type="RefSeq" id="WP_012347598.1">
    <property type="nucleotide sequence ID" value="NC_010524.1"/>
</dbReference>
<dbReference type="SMR" id="B1Y787"/>
<dbReference type="STRING" id="395495.Lcho_2577"/>
<dbReference type="KEGG" id="lch:Lcho_2577"/>
<dbReference type="eggNOG" id="COG0484">
    <property type="taxonomic scope" value="Bacteria"/>
</dbReference>
<dbReference type="HOGENOM" id="CLU_017633_0_7_4"/>
<dbReference type="OrthoDB" id="9779889at2"/>
<dbReference type="Proteomes" id="UP000001693">
    <property type="component" value="Chromosome"/>
</dbReference>
<dbReference type="GO" id="GO:0005737">
    <property type="term" value="C:cytoplasm"/>
    <property type="evidence" value="ECO:0007669"/>
    <property type="project" value="UniProtKB-SubCell"/>
</dbReference>
<dbReference type="GO" id="GO:0005524">
    <property type="term" value="F:ATP binding"/>
    <property type="evidence" value="ECO:0007669"/>
    <property type="project" value="InterPro"/>
</dbReference>
<dbReference type="GO" id="GO:0031072">
    <property type="term" value="F:heat shock protein binding"/>
    <property type="evidence" value="ECO:0007669"/>
    <property type="project" value="InterPro"/>
</dbReference>
<dbReference type="GO" id="GO:0051082">
    <property type="term" value="F:unfolded protein binding"/>
    <property type="evidence" value="ECO:0007669"/>
    <property type="project" value="UniProtKB-UniRule"/>
</dbReference>
<dbReference type="GO" id="GO:0008270">
    <property type="term" value="F:zinc ion binding"/>
    <property type="evidence" value="ECO:0007669"/>
    <property type="project" value="UniProtKB-UniRule"/>
</dbReference>
<dbReference type="GO" id="GO:0051085">
    <property type="term" value="P:chaperone cofactor-dependent protein refolding"/>
    <property type="evidence" value="ECO:0007669"/>
    <property type="project" value="TreeGrafter"/>
</dbReference>
<dbReference type="GO" id="GO:0006260">
    <property type="term" value="P:DNA replication"/>
    <property type="evidence" value="ECO:0007669"/>
    <property type="project" value="UniProtKB-KW"/>
</dbReference>
<dbReference type="GO" id="GO:0042026">
    <property type="term" value="P:protein refolding"/>
    <property type="evidence" value="ECO:0007669"/>
    <property type="project" value="TreeGrafter"/>
</dbReference>
<dbReference type="GO" id="GO:0009408">
    <property type="term" value="P:response to heat"/>
    <property type="evidence" value="ECO:0007669"/>
    <property type="project" value="InterPro"/>
</dbReference>
<dbReference type="CDD" id="cd06257">
    <property type="entry name" value="DnaJ"/>
    <property type="match status" value="1"/>
</dbReference>
<dbReference type="CDD" id="cd10747">
    <property type="entry name" value="DnaJ_C"/>
    <property type="match status" value="1"/>
</dbReference>
<dbReference type="CDD" id="cd10719">
    <property type="entry name" value="DnaJ_zf"/>
    <property type="match status" value="1"/>
</dbReference>
<dbReference type="FunFam" id="1.10.287.110:FF:000034">
    <property type="entry name" value="Chaperone protein DnaJ"/>
    <property type="match status" value="1"/>
</dbReference>
<dbReference type="FunFam" id="2.10.230.10:FF:000002">
    <property type="entry name" value="Molecular chaperone DnaJ"/>
    <property type="match status" value="1"/>
</dbReference>
<dbReference type="FunFam" id="2.60.260.20:FF:000004">
    <property type="entry name" value="Molecular chaperone DnaJ"/>
    <property type="match status" value="1"/>
</dbReference>
<dbReference type="Gene3D" id="1.10.287.110">
    <property type="entry name" value="DnaJ domain"/>
    <property type="match status" value="1"/>
</dbReference>
<dbReference type="Gene3D" id="2.10.230.10">
    <property type="entry name" value="Heat shock protein DnaJ, cysteine-rich domain"/>
    <property type="match status" value="1"/>
</dbReference>
<dbReference type="Gene3D" id="2.60.260.20">
    <property type="entry name" value="Urease metallochaperone UreE, N-terminal domain"/>
    <property type="match status" value="2"/>
</dbReference>
<dbReference type="HAMAP" id="MF_01152">
    <property type="entry name" value="DnaJ"/>
    <property type="match status" value="1"/>
</dbReference>
<dbReference type="InterPro" id="IPR012724">
    <property type="entry name" value="DnaJ"/>
</dbReference>
<dbReference type="InterPro" id="IPR002939">
    <property type="entry name" value="DnaJ_C"/>
</dbReference>
<dbReference type="InterPro" id="IPR001623">
    <property type="entry name" value="DnaJ_domain"/>
</dbReference>
<dbReference type="InterPro" id="IPR018253">
    <property type="entry name" value="DnaJ_domain_CS"/>
</dbReference>
<dbReference type="InterPro" id="IPR008971">
    <property type="entry name" value="HSP40/DnaJ_pept-bd"/>
</dbReference>
<dbReference type="InterPro" id="IPR001305">
    <property type="entry name" value="HSP_DnaJ_Cys-rich_dom"/>
</dbReference>
<dbReference type="InterPro" id="IPR036410">
    <property type="entry name" value="HSP_DnaJ_Cys-rich_dom_sf"/>
</dbReference>
<dbReference type="InterPro" id="IPR036869">
    <property type="entry name" value="J_dom_sf"/>
</dbReference>
<dbReference type="NCBIfam" id="TIGR02349">
    <property type="entry name" value="DnaJ_bact"/>
    <property type="match status" value="1"/>
</dbReference>
<dbReference type="NCBIfam" id="NF008035">
    <property type="entry name" value="PRK10767.1"/>
    <property type="match status" value="1"/>
</dbReference>
<dbReference type="PANTHER" id="PTHR43096:SF48">
    <property type="entry name" value="CHAPERONE PROTEIN DNAJ"/>
    <property type="match status" value="1"/>
</dbReference>
<dbReference type="PANTHER" id="PTHR43096">
    <property type="entry name" value="DNAJ HOMOLOG 1, MITOCHONDRIAL-RELATED"/>
    <property type="match status" value="1"/>
</dbReference>
<dbReference type="Pfam" id="PF00226">
    <property type="entry name" value="DnaJ"/>
    <property type="match status" value="1"/>
</dbReference>
<dbReference type="Pfam" id="PF01556">
    <property type="entry name" value="DnaJ_C"/>
    <property type="match status" value="1"/>
</dbReference>
<dbReference type="Pfam" id="PF00684">
    <property type="entry name" value="DnaJ_CXXCXGXG"/>
    <property type="match status" value="1"/>
</dbReference>
<dbReference type="PRINTS" id="PR00625">
    <property type="entry name" value="JDOMAIN"/>
</dbReference>
<dbReference type="SMART" id="SM00271">
    <property type="entry name" value="DnaJ"/>
    <property type="match status" value="1"/>
</dbReference>
<dbReference type="SUPFAM" id="SSF46565">
    <property type="entry name" value="Chaperone J-domain"/>
    <property type="match status" value="1"/>
</dbReference>
<dbReference type="SUPFAM" id="SSF57938">
    <property type="entry name" value="DnaJ/Hsp40 cysteine-rich domain"/>
    <property type="match status" value="1"/>
</dbReference>
<dbReference type="SUPFAM" id="SSF49493">
    <property type="entry name" value="HSP40/DnaJ peptide-binding domain"/>
    <property type="match status" value="2"/>
</dbReference>
<dbReference type="PROSITE" id="PS00636">
    <property type="entry name" value="DNAJ_1"/>
    <property type="match status" value="1"/>
</dbReference>
<dbReference type="PROSITE" id="PS50076">
    <property type="entry name" value="DNAJ_2"/>
    <property type="match status" value="1"/>
</dbReference>
<dbReference type="PROSITE" id="PS51188">
    <property type="entry name" value="ZF_CR"/>
    <property type="match status" value="1"/>
</dbReference>
<sequence length="385" mass="41391">MGKRDYYEVLGVGKTASEDEIKKAYRKLAMKHHPDRNQGDGAKASEEKFKEAKEAYEMLSDAQKRAAYDQFGHAGVDPNAGGAGFRPGAGGEGYGGFAEAFGDIFGDIFGQQGGGGRRGAGGQQVYRGADLSYAMEITLEEAAHGKESQIRIPTWEECDTCHGSGAKPGTSAKPCTTCHGAGTVHLRQGFFSIQQTCPHCHGSGKIIPEPCTSCNGAGKVKKQKTLEVKIPAGINEGQRIALRGHGEPGTQGGPAGDLYVEIRIKQHEIFERDSDDLHCTVPVPLTTAALGGAIEVPTLSGSAEIELPEGTQHGKTFRLRGKGIKGIRSNYPGDLYCHVSVETPVKLTEHQRKLLKELDESFRKGGDKHSPTSKSWTDRVKDLFK</sequence>
<evidence type="ECO:0000255" key="1">
    <source>
        <dbReference type="HAMAP-Rule" id="MF_01152"/>
    </source>
</evidence>
<evidence type="ECO:0000256" key="2">
    <source>
        <dbReference type="SAM" id="MobiDB-lite"/>
    </source>
</evidence>
<reference key="1">
    <citation type="submission" date="2008-03" db="EMBL/GenBank/DDBJ databases">
        <title>Complete sequence of Leptothrix cholodnii SP-6.</title>
        <authorList>
            <consortium name="US DOE Joint Genome Institute"/>
            <person name="Copeland A."/>
            <person name="Lucas S."/>
            <person name="Lapidus A."/>
            <person name="Glavina del Rio T."/>
            <person name="Dalin E."/>
            <person name="Tice H."/>
            <person name="Bruce D."/>
            <person name="Goodwin L."/>
            <person name="Pitluck S."/>
            <person name="Chertkov O."/>
            <person name="Brettin T."/>
            <person name="Detter J.C."/>
            <person name="Han C."/>
            <person name="Kuske C.R."/>
            <person name="Schmutz J."/>
            <person name="Larimer F."/>
            <person name="Land M."/>
            <person name="Hauser L."/>
            <person name="Kyrpides N."/>
            <person name="Lykidis A."/>
            <person name="Emerson D."/>
            <person name="Richardson P."/>
        </authorList>
    </citation>
    <scope>NUCLEOTIDE SEQUENCE [LARGE SCALE GENOMIC DNA]</scope>
    <source>
        <strain>ATCC 51168 / LMG 8142 / SP-6</strain>
    </source>
</reference>
<gene>
    <name evidence="1" type="primary">dnaJ</name>
    <name type="ordered locus">Lcho_2577</name>
</gene>
<accession>B1Y787</accession>